<proteinExistence type="inferred from homology"/>
<comment type="function">
    <text evidence="1">Transaldolase is important for the balance of metabolites in the pentose-phosphate pathway.</text>
</comment>
<comment type="catalytic activity">
    <reaction evidence="1">
        <text>D-sedoheptulose 7-phosphate + D-glyceraldehyde 3-phosphate = D-erythrose 4-phosphate + beta-D-fructose 6-phosphate</text>
        <dbReference type="Rhea" id="RHEA:17053"/>
        <dbReference type="ChEBI" id="CHEBI:16897"/>
        <dbReference type="ChEBI" id="CHEBI:57483"/>
        <dbReference type="ChEBI" id="CHEBI:57634"/>
        <dbReference type="ChEBI" id="CHEBI:59776"/>
        <dbReference type="EC" id="2.2.1.2"/>
    </reaction>
</comment>
<comment type="pathway">
    <text evidence="1">Carbohydrate degradation; pentose phosphate pathway; D-glyceraldehyde 3-phosphate and beta-D-fructose 6-phosphate from D-ribose 5-phosphate and D-xylulose 5-phosphate (non-oxidative stage): step 2/3.</text>
</comment>
<comment type="subcellular location">
    <subcellularLocation>
        <location evidence="1">Cytoplasm</location>
    </subcellularLocation>
</comment>
<comment type="similarity">
    <text evidence="1">Belongs to the transaldolase family. Type 3B subfamily.</text>
</comment>
<sequence>MKFFVDTADVKEIRELNDLGLVDGVTTNPSLILKSGRDIIEVTKEICNIVKGPVSAEVAATEYEQMMKEAAVIARIADNICIKLPVTLDGLKACKALTSEGHKVNMTLCFSANQALLAAKAGATFISPFIGRLDDTGINGMELIAEIRTIYDNYDFRTEILAASVRTVNHVKEAALIGADVVTAPPATLKALVKHPLTDKGLETFLADWAKTGQKIA</sequence>
<dbReference type="EC" id="2.2.1.2" evidence="1"/>
<dbReference type="EMBL" id="CP000708">
    <property type="protein sequence ID" value="ABQ61553.1"/>
    <property type="molecule type" value="Genomic_DNA"/>
</dbReference>
<dbReference type="SMR" id="A5VSE7"/>
<dbReference type="KEGG" id="bov:BOV_1738"/>
<dbReference type="HOGENOM" id="CLU_079764_0_0_5"/>
<dbReference type="PhylomeDB" id="A5VSE7"/>
<dbReference type="UniPathway" id="UPA00115">
    <property type="reaction ID" value="UER00414"/>
</dbReference>
<dbReference type="Proteomes" id="UP000006383">
    <property type="component" value="Chromosome I"/>
</dbReference>
<dbReference type="GO" id="GO:0005737">
    <property type="term" value="C:cytoplasm"/>
    <property type="evidence" value="ECO:0007669"/>
    <property type="project" value="UniProtKB-SubCell"/>
</dbReference>
<dbReference type="GO" id="GO:0016832">
    <property type="term" value="F:aldehyde-lyase activity"/>
    <property type="evidence" value="ECO:0007669"/>
    <property type="project" value="InterPro"/>
</dbReference>
<dbReference type="GO" id="GO:0004801">
    <property type="term" value="F:transaldolase activity"/>
    <property type="evidence" value="ECO:0007669"/>
    <property type="project" value="UniProtKB-UniRule"/>
</dbReference>
<dbReference type="GO" id="GO:0005975">
    <property type="term" value="P:carbohydrate metabolic process"/>
    <property type="evidence" value="ECO:0007669"/>
    <property type="project" value="InterPro"/>
</dbReference>
<dbReference type="GO" id="GO:0006098">
    <property type="term" value="P:pentose-phosphate shunt"/>
    <property type="evidence" value="ECO:0007669"/>
    <property type="project" value="UniProtKB-UniRule"/>
</dbReference>
<dbReference type="CDD" id="cd00956">
    <property type="entry name" value="Transaldolase_FSA"/>
    <property type="match status" value="1"/>
</dbReference>
<dbReference type="FunFam" id="3.20.20.70:FF:000018">
    <property type="entry name" value="Probable transaldolase"/>
    <property type="match status" value="1"/>
</dbReference>
<dbReference type="Gene3D" id="3.20.20.70">
    <property type="entry name" value="Aldolase class I"/>
    <property type="match status" value="1"/>
</dbReference>
<dbReference type="HAMAP" id="MF_00494">
    <property type="entry name" value="Transaldolase_3b"/>
    <property type="match status" value="1"/>
</dbReference>
<dbReference type="InterPro" id="IPR013785">
    <property type="entry name" value="Aldolase_TIM"/>
</dbReference>
<dbReference type="InterPro" id="IPR001585">
    <property type="entry name" value="TAL/FSA"/>
</dbReference>
<dbReference type="InterPro" id="IPR022999">
    <property type="entry name" value="Transaldolase_3B"/>
</dbReference>
<dbReference type="InterPro" id="IPR004731">
    <property type="entry name" value="Transaldolase_3B/F6P_aldolase"/>
</dbReference>
<dbReference type="InterPro" id="IPR018225">
    <property type="entry name" value="Transaldolase_AS"/>
</dbReference>
<dbReference type="InterPro" id="IPR033919">
    <property type="entry name" value="TSA/FSA_arc/bac"/>
</dbReference>
<dbReference type="NCBIfam" id="TIGR00875">
    <property type="entry name" value="fsa_talC_mipB"/>
    <property type="match status" value="1"/>
</dbReference>
<dbReference type="PANTHER" id="PTHR10683:SF40">
    <property type="entry name" value="FRUCTOSE-6-PHOSPHATE ALDOLASE 1-RELATED"/>
    <property type="match status" value="1"/>
</dbReference>
<dbReference type="PANTHER" id="PTHR10683">
    <property type="entry name" value="TRANSALDOLASE"/>
    <property type="match status" value="1"/>
</dbReference>
<dbReference type="Pfam" id="PF00923">
    <property type="entry name" value="TAL_FSA"/>
    <property type="match status" value="1"/>
</dbReference>
<dbReference type="SUPFAM" id="SSF51569">
    <property type="entry name" value="Aldolase"/>
    <property type="match status" value="1"/>
</dbReference>
<dbReference type="PROSITE" id="PS01054">
    <property type="entry name" value="TRANSALDOLASE_1"/>
    <property type="match status" value="1"/>
</dbReference>
<dbReference type="PROSITE" id="PS00958">
    <property type="entry name" value="TRANSALDOLASE_2"/>
    <property type="match status" value="1"/>
</dbReference>
<name>TAL_BRUO2</name>
<protein>
    <recommendedName>
        <fullName evidence="1">Probable transaldolase</fullName>
        <ecNumber evidence="1">2.2.1.2</ecNumber>
    </recommendedName>
</protein>
<feature type="chain" id="PRO_1000060461" description="Probable transaldolase">
    <location>
        <begin position="1"/>
        <end position="217"/>
    </location>
</feature>
<feature type="active site" description="Schiff-base intermediate with substrate" evidence="1">
    <location>
        <position position="83"/>
    </location>
</feature>
<evidence type="ECO:0000255" key="1">
    <source>
        <dbReference type="HAMAP-Rule" id="MF_00494"/>
    </source>
</evidence>
<reference key="1">
    <citation type="journal article" date="2009" name="PLoS ONE">
        <title>Genome degradation in Brucella ovis corresponds with narrowing of its host range and tissue tropism.</title>
        <authorList>
            <person name="Tsolis R.M."/>
            <person name="Seshadri R."/>
            <person name="Santos R.L."/>
            <person name="Sangari F.J."/>
            <person name="Lobo J.M."/>
            <person name="de Jong M.F."/>
            <person name="Ren Q."/>
            <person name="Myers G."/>
            <person name="Brinkac L.M."/>
            <person name="Nelson W.C."/>
            <person name="Deboy R.T."/>
            <person name="Angiuoli S."/>
            <person name="Khouri H."/>
            <person name="Dimitrov G."/>
            <person name="Robinson J.R."/>
            <person name="Mulligan S."/>
            <person name="Walker R.L."/>
            <person name="Elzer P.E."/>
            <person name="Hassan K.A."/>
            <person name="Paulsen I.T."/>
        </authorList>
    </citation>
    <scope>NUCLEOTIDE SEQUENCE [LARGE SCALE GENOMIC DNA]</scope>
    <source>
        <strain>ATCC 25840 / 63/290 / NCTC 10512</strain>
    </source>
</reference>
<organism>
    <name type="scientific">Brucella ovis (strain ATCC 25840 / 63/290 / NCTC 10512)</name>
    <dbReference type="NCBI Taxonomy" id="444178"/>
    <lineage>
        <taxon>Bacteria</taxon>
        <taxon>Pseudomonadati</taxon>
        <taxon>Pseudomonadota</taxon>
        <taxon>Alphaproteobacteria</taxon>
        <taxon>Hyphomicrobiales</taxon>
        <taxon>Brucellaceae</taxon>
        <taxon>Brucella/Ochrobactrum group</taxon>
        <taxon>Brucella</taxon>
    </lineage>
</organism>
<keyword id="KW-0963">Cytoplasm</keyword>
<keyword id="KW-0570">Pentose shunt</keyword>
<keyword id="KW-0704">Schiff base</keyword>
<keyword id="KW-0808">Transferase</keyword>
<gene>
    <name evidence="1" type="primary">tal</name>
    <name type="ordered locus">BOV_1738</name>
</gene>
<accession>A5VSE7</accession>